<accession>Q9QUG2</accession>
<accession>Q7TPY7</accession>
<gene>
    <name type="primary">Polk</name>
    <name type="synonym">Dinb1</name>
</gene>
<dbReference type="EC" id="2.7.7.7" evidence="2"/>
<dbReference type="EMBL" id="AB027563">
    <property type="protein sequence ID" value="BAA86942.1"/>
    <property type="molecule type" value="mRNA"/>
</dbReference>
<dbReference type="EMBL" id="AF163571">
    <property type="protein sequence ID" value="AAF02541.1"/>
    <property type="molecule type" value="mRNA"/>
</dbReference>
<dbReference type="EMBL" id="AB040765">
    <property type="protein sequence ID" value="BAB59059.1"/>
    <property type="molecule type" value="Genomic_DNA"/>
</dbReference>
<dbReference type="EMBL" id="BC052820">
    <property type="protein sequence ID" value="AAH52820.1"/>
    <property type="molecule type" value="mRNA"/>
</dbReference>
<dbReference type="CCDS" id="CCDS26704.1">
    <molecule id="Q9QUG2-1"/>
</dbReference>
<dbReference type="RefSeq" id="NP_036178.1">
    <molecule id="Q9QUG2-1"/>
    <property type="nucleotide sequence ID" value="NM_012048.3"/>
</dbReference>
<dbReference type="PDB" id="2LSJ">
    <property type="method" value="NMR"/>
    <property type="chains" value="B=560-582"/>
</dbReference>
<dbReference type="PDB" id="4FJO">
    <property type="method" value="X-ray"/>
    <property type="resolution" value="2.72 A"/>
    <property type="chains" value="B=565-574"/>
</dbReference>
<dbReference type="PDB" id="6C59">
    <property type="method" value="X-ray"/>
    <property type="resolution" value="2.03 A"/>
    <property type="chains" value="A=564-577"/>
</dbReference>
<dbReference type="PDB" id="6C8C">
    <property type="method" value="X-ray"/>
    <property type="resolution" value="1.50 A"/>
    <property type="chains" value="A/B=564-577"/>
</dbReference>
<dbReference type="PDBsum" id="2LSJ"/>
<dbReference type="PDBsum" id="4FJO"/>
<dbReference type="PDBsum" id="6C59"/>
<dbReference type="PDBsum" id="6C8C"/>
<dbReference type="SMR" id="Q9QUG2"/>
<dbReference type="BioGRID" id="205098">
    <property type="interactions" value="7"/>
</dbReference>
<dbReference type="FunCoup" id="Q9QUG2">
    <property type="interactions" value="3427"/>
</dbReference>
<dbReference type="IntAct" id="Q9QUG2">
    <property type="interactions" value="1"/>
</dbReference>
<dbReference type="STRING" id="10090.ENSMUSP00000022172"/>
<dbReference type="iPTMnet" id="Q9QUG2"/>
<dbReference type="PhosphoSitePlus" id="Q9QUG2"/>
<dbReference type="PaxDb" id="10090-ENSMUSP00000022172"/>
<dbReference type="ProteomicsDB" id="289361">
    <molecule id="Q9QUG2-1"/>
</dbReference>
<dbReference type="ProteomicsDB" id="289362">
    <molecule id="Q9QUG2-2"/>
</dbReference>
<dbReference type="Antibodypedia" id="12396">
    <property type="antibodies" value="339 antibodies from 31 providers"/>
</dbReference>
<dbReference type="DNASU" id="27015"/>
<dbReference type="Ensembl" id="ENSMUST00000022172.12">
    <molecule id="Q9QUG2-1"/>
    <property type="protein sequence ID" value="ENSMUSP00000022172.5"/>
    <property type="gene ID" value="ENSMUSG00000021668.16"/>
</dbReference>
<dbReference type="GeneID" id="27015"/>
<dbReference type="KEGG" id="mmu:27015"/>
<dbReference type="UCSC" id="uc007rne.1">
    <molecule id="Q9QUG2-1"/>
    <property type="organism name" value="mouse"/>
</dbReference>
<dbReference type="AGR" id="MGI:1349767"/>
<dbReference type="CTD" id="51426"/>
<dbReference type="MGI" id="MGI:1349767">
    <property type="gene designation" value="Polk"/>
</dbReference>
<dbReference type="VEuPathDB" id="HostDB:ENSMUSG00000021668"/>
<dbReference type="eggNOG" id="KOG2094">
    <property type="taxonomic scope" value="Eukaryota"/>
</dbReference>
<dbReference type="GeneTree" id="ENSGT00940000156667"/>
<dbReference type="HOGENOM" id="CLU_012348_11_3_1"/>
<dbReference type="InParanoid" id="Q9QUG2"/>
<dbReference type="OMA" id="SWHNFLD"/>
<dbReference type="OrthoDB" id="1747274at2759"/>
<dbReference type="PhylomeDB" id="Q9QUG2"/>
<dbReference type="TreeFam" id="TF314387"/>
<dbReference type="Reactome" id="R-MMU-5655862">
    <property type="pathway name" value="Translesion synthesis by POLK"/>
</dbReference>
<dbReference type="Reactome" id="R-MMU-5656169">
    <property type="pathway name" value="Termination of translesion DNA synthesis"/>
</dbReference>
<dbReference type="Reactome" id="R-MMU-5685942">
    <property type="pathway name" value="HDR through Homologous Recombination (HRR)"/>
</dbReference>
<dbReference type="Reactome" id="R-MMU-5696397">
    <property type="pathway name" value="Gap-filling DNA repair synthesis and ligation in GG-NER"/>
</dbReference>
<dbReference type="Reactome" id="R-MMU-5696400">
    <property type="pathway name" value="Dual Incision in GG-NER"/>
</dbReference>
<dbReference type="Reactome" id="R-MMU-6782135">
    <property type="pathway name" value="Dual incision in TC-NER"/>
</dbReference>
<dbReference type="Reactome" id="R-MMU-6782210">
    <property type="pathway name" value="Gap-filling DNA repair synthesis and ligation in TC-NER"/>
</dbReference>
<dbReference type="BioGRID-ORCS" id="27015">
    <property type="hits" value="4 hits in 114 CRISPR screens"/>
</dbReference>
<dbReference type="ChiTaRS" id="Polk">
    <property type="organism name" value="mouse"/>
</dbReference>
<dbReference type="EvolutionaryTrace" id="Q9QUG2"/>
<dbReference type="PRO" id="PR:Q9QUG2"/>
<dbReference type="Proteomes" id="UP000000589">
    <property type="component" value="Chromosome 13"/>
</dbReference>
<dbReference type="RNAct" id="Q9QUG2">
    <property type="molecule type" value="protein"/>
</dbReference>
<dbReference type="Bgee" id="ENSMUSG00000021668">
    <property type="expression patterns" value="Expressed in spermatid and 245 other cell types or tissues"/>
</dbReference>
<dbReference type="ExpressionAtlas" id="Q9QUG2">
    <property type="expression patterns" value="baseline and differential"/>
</dbReference>
<dbReference type="GO" id="GO:0016604">
    <property type="term" value="C:nuclear body"/>
    <property type="evidence" value="ECO:0007669"/>
    <property type="project" value="Ensembl"/>
</dbReference>
<dbReference type="GO" id="GO:0005634">
    <property type="term" value="C:nucleus"/>
    <property type="evidence" value="ECO:0000314"/>
    <property type="project" value="MGI"/>
</dbReference>
<dbReference type="GO" id="GO:0090734">
    <property type="term" value="C:site of DNA damage"/>
    <property type="evidence" value="ECO:0007669"/>
    <property type="project" value="Ensembl"/>
</dbReference>
<dbReference type="GO" id="GO:0003684">
    <property type="term" value="F:damaged DNA binding"/>
    <property type="evidence" value="ECO:0007669"/>
    <property type="project" value="InterPro"/>
</dbReference>
<dbReference type="GO" id="GO:0003887">
    <property type="term" value="F:DNA-directed DNA polymerase activity"/>
    <property type="evidence" value="ECO:0000304"/>
    <property type="project" value="MGI"/>
</dbReference>
<dbReference type="GO" id="GO:0060090">
    <property type="term" value="F:molecular adaptor activity"/>
    <property type="evidence" value="ECO:0000269"/>
    <property type="project" value="DisProt"/>
</dbReference>
<dbReference type="GO" id="GO:0008270">
    <property type="term" value="F:zinc ion binding"/>
    <property type="evidence" value="ECO:0007669"/>
    <property type="project" value="UniProtKB-KW"/>
</dbReference>
<dbReference type="GO" id="GO:0034644">
    <property type="term" value="P:cellular response to UV"/>
    <property type="evidence" value="ECO:0000250"/>
    <property type="project" value="UniProtKB"/>
</dbReference>
<dbReference type="GO" id="GO:0006974">
    <property type="term" value="P:DNA damage response"/>
    <property type="evidence" value="ECO:0000250"/>
    <property type="project" value="UniProtKB"/>
</dbReference>
<dbReference type="GO" id="GO:0006281">
    <property type="term" value="P:DNA repair"/>
    <property type="evidence" value="ECO:0000315"/>
    <property type="project" value="MGI"/>
</dbReference>
<dbReference type="GO" id="GO:0006260">
    <property type="term" value="P:DNA replication"/>
    <property type="evidence" value="ECO:0007669"/>
    <property type="project" value="UniProtKB-KW"/>
</dbReference>
<dbReference type="GO" id="GO:0042276">
    <property type="term" value="P:error-prone translesion synthesis"/>
    <property type="evidence" value="ECO:0000250"/>
    <property type="project" value="UniProtKB"/>
</dbReference>
<dbReference type="GO" id="GO:0006297">
    <property type="term" value="P:nucleotide-excision repair, DNA gap filling"/>
    <property type="evidence" value="ECO:0007669"/>
    <property type="project" value="Ensembl"/>
</dbReference>
<dbReference type="CDD" id="cd03586">
    <property type="entry name" value="PolY_Pol_IV_kappa"/>
    <property type="match status" value="1"/>
</dbReference>
<dbReference type="DisProt" id="DP02626"/>
<dbReference type="FunFam" id="1.10.150.810:FF:000001">
    <property type="entry name" value="DNA polymerase kappa"/>
    <property type="match status" value="1"/>
</dbReference>
<dbReference type="FunFam" id="3.30.1490.100:FF:000005">
    <property type="entry name" value="DNA polymerase kappa"/>
    <property type="match status" value="1"/>
</dbReference>
<dbReference type="FunFam" id="3.30.160.60:FF:000956">
    <property type="entry name" value="DNA polymerase kappa"/>
    <property type="match status" value="1"/>
</dbReference>
<dbReference type="FunFam" id="1.10.150.20:FF:000039">
    <property type="entry name" value="Polymerase (DNA directed) kappa"/>
    <property type="match status" value="1"/>
</dbReference>
<dbReference type="FunFam" id="1.10.150.810:FF:000002">
    <property type="entry name" value="Polymerase (DNA directed) kappa"/>
    <property type="match status" value="1"/>
</dbReference>
<dbReference type="FunFam" id="3.30.160.60:FF:000807">
    <property type="entry name" value="Polymerase (DNA directed) kappa"/>
    <property type="match status" value="1"/>
</dbReference>
<dbReference type="FunFam" id="3.30.70.270:FF:000151">
    <property type="entry name" value="Polymerase (DNA directed) kappa"/>
    <property type="match status" value="1"/>
</dbReference>
<dbReference type="FunFam" id="3.40.1170.60:FF:000002">
    <property type="entry name" value="Polymerase (DNA directed) kappa"/>
    <property type="match status" value="1"/>
</dbReference>
<dbReference type="Gene3D" id="1.10.150.810">
    <property type="match status" value="2"/>
</dbReference>
<dbReference type="Gene3D" id="3.30.70.270">
    <property type="match status" value="1"/>
</dbReference>
<dbReference type="Gene3D" id="3.40.1170.60">
    <property type="match status" value="1"/>
</dbReference>
<dbReference type="Gene3D" id="3.30.160.60">
    <property type="entry name" value="Classic Zinc Finger"/>
    <property type="match status" value="2"/>
</dbReference>
<dbReference type="Gene3D" id="3.30.1490.100">
    <property type="entry name" value="DNA polymerase, Y-family, little finger domain"/>
    <property type="match status" value="1"/>
</dbReference>
<dbReference type="HAMAP" id="MF_01113">
    <property type="entry name" value="DNApol_IV"/>
    <property type="match status" value="1"/>
</dbReference>
<dbReference type="InterPro" id="IPR043502">
    <property type="entry name" value="DNA/RNA_pol_sf"/>
</dbReference>
<dbReference type="InterPro" id="IPR036775">
    <property type="entry name" value="DNA_pol_Y-fam_lit_finger_sf"/>
</dbReference>
<dbReference type="InterPro" id="IPR017961">
    <property type="entry name" value="DNA_pol_Y-fam_little_finger"/>
</dbReference>
<dbReference type="InterPro" id="IPR050116">
    <property type="entry name" value="DNA_polymerase-Y"/>
</dbReference>
<dbReference type="InterPro" id="IPR022880">
    <property type="entry name" value="DNApol_IV"/>
</dbReference>
<dbReference type="InterPro" id="IPR006642">
    <property type="entry name" value="Rad18_UBZ4"/>
</dbReference>
<dbReference type="InterPro" id="IPR043128">
    <property type="entry name" value="Rev_trsase/Diguanyl_cyclase"/>
</dbReference>
<dbReference type="InterPro" id="IPR001126">
    <property type="entry name" value="UmuC"/>
</dbReference>
<dbReference type="PANTHER" id="PTHR11076:SF33">
    <property type="entry name" value="DNA POLYMERASE KAPPA"/>
    <property type="match status" value="1"/>
</dbReference>
<dbReference type="PANTHER" id="PTHR11076">
    <property type="entry name" value="DNA REPAIR POLYMERASE UMUC / TRANSFERASE FAMILY MEMBER"/>
    <property type="match status" value="1"/>
</dbReference>
<dbReference type="Pfam" id="PF00817">
    <property type="entry name" value="IMS"/>
    <property type="match status" value="1"/>
</dbReference>
<dbReference type="Pfam" id="PF11799">
    <property type="entry name" value="IMS_C"/>
    <property type="match status" value="1"/>
</dbReference>
<dbReference type="PIRSF" id="PIRSF036603">
    <property type="entry name" value="DPol_eta"/>
    <property type="match status" value="1"/>
</dbReference>
<dbReference type="SMART" id="SM00734">
    <property type="entry name" value="ZnF_Rad18"/>
    <property type="match status" value="2"/>
</dbReference>
<dbReference type="SUPFAM" id="SSF56672">
    <property type="entry name" value="DNA/RNA polymerases"/>
    <property type="match status" value="1"/>
</dbReference>
<dbReference type="SUPFAM" id="SSF100879">
    <property type="entry name" value="Lesion bypass DNA polymerase (Y-family), little finger domain"/>
    <property type="match status" value="1"/>
</dbReference>
<dbReference type="PROSITE" id="PS50173">
    <property type="entry name" value="UMUC"/>
    <property type="match status" value="1"/>
</dbReference>
<dbReference type="PROSITE" id="PS51908">
    <property type="entry name" value="ZF_UBZ4"/>
    <property type="match status" value="2"/>
</dbReference>
<feature type="chain" id="PRO_0000173991" description="DNA polymerase kappa">
    <location>
        <begin position="1"/>
        <end position="852"/>
    </location>
</feature>
<feature type="domain" description="UmuC">
    <location>
        <begin position="102"/>
        <end position="357"/>
    </location>
</feature>
<feature type="zinc finger region" description="UBZ4-type 1" evidence="3">
    <location>
        <begin position="619"/>
        <end position="649"/>
    </location>
</feature>
<feature type="zinc finger region" description="UBZ4-type 2" evidence="3">
    <location>
        <begin position="761"/>
        <end position="791"/>
    </location>
</feature>
<feature type="region of interest" description="Disordered" evidence="4">
    <location>
        <begin position="252"/>
        <end position="273"/>
    </location>
</feature>
<feature type="region of interest" description="Disordered" evidence="4">
    <location>
        <begin position="798"/>
        <end position="852"/>
    </location>
</feature>
<feature type="compositionally biased region" description="Polar residues" evidence="4">
    <location>
        <begin position="261"/>
        <end position="273"/>
    </location>
</feature>
<feature type="compositionally biased region" description="Basic and acidic residues" evidence="4">
    <location>
        <begin position="805"/>
        <end position="817"/>
    </location>
</feature>
<feature type="compositionally biased region" description="Basic residues" evidence="4">
    <location>
        <begin position="821"/>
        <end position="839"/>
    </location>
</feature>
<feature type="compositionally biased region" description="Basic and acidic residues" evidence="4">
    <location>
        <begin position="840"/>
        <end position="852"/>
    </location>
</feature>
<feature type="binding site" evidence="1">
    <location>
        <position position="106"/>
    </location>
    <ligand>
        <name>Mg(2+)</name>
        <dbReference type="ChEBI" id="CHEBI:18420"/>
    </ligand>
</feature>
<feature type="binding site" evidence="1">
    <location>
        <position position="197"/>
    </location>
    <ligand>
        <name>Mg(2+)</name>
        <dbReference type="ChEBI" id="CHEBI:18420"/>
    </ligand>
</feature>
<feature type="binding site" evidence="3">
    <location>
        <position position="622"/>
    </location>
    <ligand>
        <name>Zn(2+)</name>
        <dbReference type="ChEBI" id="CHEBI:29105"/>
        <label>1</label>
    </ligand>
</feature>
<feature type="binding site" evidence="3">
    <location>
        <position position="625"/>
    </location>
    <ligand>
        <name>Zn(2+)</name>
        <dbReference type="ChEBI" id="CHEBI:29105"/>
        <label>1</label>
    </ligand>
</feature>
<feature type="binding site" evidence="3">
    <location>
        <position position="640"/>
    </location>
    <ligand>
        <name>Zn(2+)</name>
        <dbReference type="ChEBI" id="CHEBI:29105"/>
        <label>1</label>
    </ligand>
</feature>
<feature type="binding site" evidence="3">
    <location>
        <position position="644"/>
    </location>
    <ligand>
        <name>Zn(2+)</name>
        <dbReference type="ChEBI" id="CHEBI:29105"/>
        <label>1</label>
    </ligand>
</feature>
<feature type="binding site" evidence="3">
    <location>
        <position position="764"/>
    </location>
    <ligand>
        <name>Zn(2+)</name>
        <dbReference type="ChEBI" id="CHEBI:29105"/>
        <label>2</label>
    </ligand>
</feature>
<feature type="binding site" evidence="3">
    <location>
        <position position="767"/>
    </location>
    <ligand>
        <name>Zn(2+)</name>
        <dbReference type="ChEBI" id="CHEBI:29105"/>
        <label>2</label>
    </ligand>
</feature>
<feature type="binding site" evidence="3">
    <location>
        <position position="782"/>
    </location>
    <ligand>
        <name>Zn(2+)</name>
        <dbReference type="ChEBI" id="CHEBI:29105"/>
        <label>2</label>
    </ligand>
</feature>
<feature type="binding site" evidence="3">
    <location>
        <position position="786"/>
    </location>
    <ligand>
        <name>Zn(2+)</name>
        <dbReference type="ChEBI" id="CHEBI:29105"/>
        <label>2</label>
    </ligand>
</feature>
<feature type="splice variant" id="VSP_012807" description="In isoform 2." evidence="9">
    <location>
        <begin position="50"/>
        <end position="185"/>
    </location>
</feature>
<feature type="splice variant" id="VSP_012808" description="In isoform 2." evidence="9">
    <original>GTKTKSSTLKKTKPRDPRHTLDGFFK</original>
    <variation>RGATSPSAPPCLATMVPLMLPYLPVCISVSCEQMQLELAMMSMKNISLT</variation>
    <location>
        <begin position="827"/>
        <end position="852"/>
    </location>
</feature>
<feature type="sequence variant" description="In strain: C3H/He." evidence="8">
    <original>D</original>
    <variation>G</variation>
    <location>
        <position position="544"/>
    </location>
</feature>
<feature type="sequence variant" description="In strain: C3H/He." evidence="8">
    <original>D</original>
    <variation>A</variation>
    <location>
        <position position="550"/>
    </location>
</feature>
<feature type="sequence variant" description="In strain: C3H/He." evidence="8">
    <original>E</original>
    <variation>Q</variation>
    <location>
        <position position="606"/>
    </location>
</feature>
<feature type="sequence variant" description="In strain: C3H/He." evidence="8">
    <original>L</original>
    <variation>S</variation>
    <location>
        <position position="692"/>
    </location>
</feature>
<feature type="sequence variant" description="In strain: C3H/He." evidence="8">
    <original>R</original>
    <variation>S</variation>
    <location>
        <position position="710"/>
    </location>
</feature>
<feature type="sequence variant" description="In strain: C3H/He." evidence="8">
    <original>E</original>
    <variation>A</variation>
    <location>
        <position position="736"/>
    </location>
</feature>
<feature type="sequence variant" description="In strain: C3H/He." evidence="8">
    <original>D</original>
    <variation>E</variation>
    <location>
        <position position="747"/>
    </location>
</feature>
<feature type="helix" evidence="11">
    <location>
        <begin position="566"/>
        <end position="573"/>
    </location>
</feature>
<reference key="1">
    <citation type="journal article" date="1999" name="Genes Cells">
        <title>Mutation enhancement by DINB1, a mammalian homologue of the Escherichia coli mutagenesis protein dinB.</title>
        <authorList>
            <person name="Ogi T."/>
            <person name="Kato T. Jr."/>
            <person name="Kato R."/>
            <person name="Ohmori H."/>
        </authorList>
    </citation>
    <scope>NUCLEOTIDE SEQUENCE [MRNA] (ISOFORM 1)</scope>
    <scope>TISSUE SPECIFICITY</scope>
    <source>
        <strain>BALB/cJ</strain>
        <tissue>Testis</tissue>
    </source>
</reference>
<reference key="2">
    <citation type="journal article" date="1999" name="Proc. Natl. Acad. Sci. U.S.A.">
        <title>Human and mouse homologs of Escherichia coli DinB (DNA polymerase IV), members of the UmuC/DinB superfamily.</title>
        <authorList>
            <person name="Gerlach V.L."/>
            <person name="Aravind L."/>
            <person name="Gotway G."/>
            <person name="Schultz R.A."/>
            <person name="Koonin E.V."/>
            <person name="Friedberg E.C."/>
        </authorList>
    </citation>
    <scope>NUCLEOTIDE SEQUENCE [MRNA] (ISOFORM 1)</scope>
    <source>
        <tissue>Testis</tissue>
    </source>
</reference>
<reference key="3">
    <citation type="journal article" date="2002" name="Proc. Natl. Acad. Sci. U.S.A.">
        <title>Pol kappa protects mammalian cells against the lethal and mutagenic effects of benzo[a]pyrene.</title>
        <authorList>
            <person name="Ogi T."/>
            <person name="Shinkai Y."/>
            <person name="Tanaka K."/>
            <person name="Ohmori H."/>
        </authorList>
    </citation>
    <scope>NUCLEOTIDE SEQUENCE [GENOMIC DNA]</scope>
    <scope>FUNCTION</scope>
</reference>
<reference key="4">
    <citation type="journal article" date="2004" name="Genome Res.">
        <title>The status, quality, and expansion of the NIH full-length cDNA project: the Mammalian Gene Collection (MGC).</title>
        <authorList>
            <consortium name="The MGC Project Team"/>
        </authorList>
    </citation>
    <scope>NUCLEOTIDE SEQUENCE [LARGE SCALE MRNA] (ISOFORM 2)</scope>
    <scope>VARIANTS GLY-544; ALA-550; GLN-606; SER-692; SER-710; ALA-736 AND GLU-747</scope>
    <source>
        <strain>C3H/He</strain>
        <tissue>Osteoblast</tissue>
    </source>
</reference>
<reference key="5">
    <citation type="journal article" date="2003" name="EMBO J.">
        <title>Mouse Rev1 protein interacts with multiple DNA polymerases involved in translesion DNA synthesis.</title>
        <authorList>
            <person name="Guo C."/>
            <person name="Fischhaber P.L."/>
            <person name="Luk-Paszyc M.J."/>
            <person name="Masuda Y."/>
            <person name="Zhou J."/>
            <person name="Kamiya K."/>
            <person name="Kisker C."/>
            <person name="Friedberg E.C."/>
        </authorList>
    </citation>
    <scope>INTERACTION WITH REV1</scope>
</reference>
<protein>
    <recommendedName>
        <fullName>DNA polymerase kappa</fullName>
        <ecNumber evidence="2">2.7.7.7</ecNumber>
    </recommendedName>
    <alternativeName>
        <fullName>DINB protein</fullName>
        <shortName>DINP</shortName>
    </alternativeName>
</protein>
<proteinExistence type="evidence at protein level"/>
<keyword id="KW-0002">3D-structure</keyword>
<keyword id="KW-0025">Alternative splicing</keyword>
<keyword id="KW-0227">DNA damage</keyword>
<keyword id="KW-0234">DNA repair</keyword>
<keyword id="KW-0235">DNA replication</keyword>
<keyword id="KW-0237">DNA synthesis</keyword>
<keyword id="KW-0238">DNA-binding</keyword>
<keyword id="KW-0239">DNA-directed DNA polymerase</keyword>
<keyword id="KW-0460">Magnesium</keyword>
<keyword id="KW-0479">Metal-binding</keyword>
<keyword id="KW-0515">Mutator protein</keyword>
<keyword id="KW-0548">Nucleotidyltransferase</keyword>
<keyword id="KW-0539">Nucleus</keyword>
<keyword id="KW-1185">Reference proteome</keyword>
<keyword id="KW-0677">Repeat</keyword>
<keyword id="KW-0704">Schiff base</keyword>
<keyword id="KW-0808">Transferase</keyword>
<keyword id="KW-0862">Zinc</keyword>
<keyword id="KW-0863">Zinc-finger</keyword>
<name>POLK_MOUSE</name>
<organism>
    <name type="scientific">Mus musculus</name>
    <name type="common">Mouse</name>
    <dbReference type="NCBI Taxonomy" id="10090"/>
    <lineage>
        <taxon>Eukaryota</taxon>
        <taxon>Metazoa</taxon>
        <taxon>Chordata</taxon>
        <taxon>Craniata</taxon>
        <taxon>Vertebrata</taxon>
        <taxon>Euteleostomi</taxon>
        <taxon>Mammalia</taxon>
        <taxon>Eutheria</taxon>
        <taxon>Euarchontoglires</taxon>
        <taxon>Glires</taxon>
        <taxon>Rodentia</taxon>
        <taxon>Myomorpha</taxon>
        <taxon>Muroidea</taxon>
        <taxon>Muridae</taxon>
        <taxon>Murinae</taxon>
        <taxon>Mus</taxon>
        <taxon>Mus</taxon>
    </lineage>
</organism>
<comment type="function">
    <text evidence="2 6">DNA polymerase specifically involved in DNA repair. Plays an important role in translesion synthesis, where the normal high-fidelity DNA polymerases cannot proceed and DNA synthesis stalls (PubMed:12432099). Depending on the context, it inserts the correct base, but causes frequent base transitions, transversions and frameshifts. Lacks 3'-5' proofreading exonuclease activity. Forms a Schiff base with 5'-deoxyribose phosphate at abasic sites, but does not have lyase activity (By similarity).</text>
</comment>
<comment type="catalytic activity">
    <reaction evidence="2">
        <text>DNA(n) + a 2'-deoxyribonucleoside 5'-triphosphate = DNA(n+1) + diphosphate</text>
        <dbReference type="Rhea" id="RHEA:22508"/>
        <dbReference type="Rhea" id="RHEA-COMP:17339"/>
        <dbReference type="Rhea" id="RHEA-COMP:17340"/>
        <dbReference type="ChEBI" id="CHEBI:33019"/>
        <dbReference type="ChEBI" id="CHEBI:61560"/>
        <dbReference type="ChEBI" id="CHEBI:173112"/>
        <dbReference type="EC" id="2.7.7.7"/>
    </reaction>
</comment>
<comment type="cofactor">
    <cofactor evidence="2">
        <name>Mg(2+)</name>
        <dbReference type="ChEBI" id="CHEBI:18420"/>
    </cofactor>
    <cofactor evidence="2">
        <name>Mn(2+)</name>
        <dbReference type="ChEBI" id="CHEBI:29035"/>
    </cofactor>
    <text evidence="2">Divalent metal cations. Prefers Mg(2+), but can also use Mn(2+).</text>
</comment>
<comment type="subunit">
    <text evidence="2 7">Interacts with PCNA (By similarity). Interacts with REV1 (PubMed:14657033).</text>
</comment>
<comment type="subcellular location">
    <subcellularLocation>
        <location evidence="2">Nucleus</location>
    </subcellularLocation>
    <text evidence="2">Detected throughout the nucleus and at replication foci. Recruited to DNA damage sites in response to ultraviolet irradiation: N6-methyladenosine (m6A)-containing mRNAs accumulate in the vicinity of DNA damage sites and their presence is required to recruit POLK.</text>
</comment>
<comment type="alternative products">
    <event type="alternative splicing"/>
    <isoform>
        <id>Q9QUG2-1</id>
        <name>1</name>
        <sequence type="displayed"/>
    </isoform>
    <isoform>
        <id>Q9QUG2-2</id>
        <name>2</name>
        <sequence type="described" ref="VSP_012807 VSP_012808"/>
    </isoform>
</comment>
<comment type="tissue specificity">
    <text evidence="5">Detected at low levels in heart, brain, lung, liver, kidney and testis.</text>
</comment>
<comment type="domain">
    <text>The catalytic core consists of fingers, palm and thumb subdomains, but the fingers and thumb subdomains are much smaller than in high-fidelity polymerases; residues from five sequence motifs of the Y-family cluster around an active site cleft that can accommodate DNA and nucleotide substrates with relaxed geometric constraints, with consequently higher rates of misincorporation and low processivity.</text>
</comment>
<comment type="similarity">
    <text evidence="10">Belongs to the DNA polymerase type-Y family.</text>
</comment>
<sequence length="852" mass="96003">MDNTKEKDNFKDDLLLRMGLNDNKAGMEGLDKEKINKIIMEATKGSRFYGNELKKEKQVNQRIENMMQQKAQITSQQLRKAQLQVDKFAMELERNRNLNNTIVHVDMDAFYAAVEMRDNPELKDKPIAVGSMSMLATSNYHARRFGVRAAMPGFIAKRLCPQLIIVPPNFDKYRAVSKEVKEILAEYDPNFMAMSLDEAYLNITQHLQERQDWPEDKRRYFIKMGNYLKIDTPRQEANELTEYERSISPLLFEDSPPDLQPQGSPFQLNSEEQNNPQIAQNSVVFGTSAEEVVKEIRFRIEQKTTLTASAGIAPNTMLAKVCSDKNKPNGQYQILPSRSAVMDFIKDLPIRKVSGIGKVTEKMLMALGIVTCTELYQQRALLSLLFSETSWHYFLHIALGLGSTDLARDGERKSMSVERTFSEISKTEEQYSLCQELCAELAHDLQKEGLKGRTVTIKLKNVNFEVKTRASTVPAAISTAEEIFAIAKELLRTEVNVGSPHPLRLRLMGVRMSTFSSEDDRKHQQRSIIGFLQAGNQALSSTGDSLDKTDKTELAKPLEMSHKKSFFDKKRSERISNCQDTSRCKTAGQQALQILEPSQALKKLSESFETSENSNDCQTFICPVCFREQEGVSLEAFNEHVDECLDGPSTSENSKISCYSHASSADIGQKEDVHPSIPLCEKRGHENGEITLVDGVDLTGTEDRSLKAARMDTLENNRSKEECPDIPDKSCPISLENETISTLSRQDSVQPCTDEVVTGRALVCPVCNLEQETSDLTLFNIHVDICLNKGIIQELRNSEGNSVKQPKESSRSTDRLQKASGRTKRPGTKTKSSTLKKTKPRDPRHTLDGFFK</sequence>
<evidence type="ECO:0000250" key="1"/>
<evidence type="ECO:0000250" key="2">
    <source>
        <dbReference type="UniProtKB" id="Q9UBT6"/>
    </source>
</evidence>
<evidence type="ECO:0000255" key="3">
    <source>
        <dbReference type="PROSITE-ProRule" id="PRU01256"/>
    </source>
</evidence>
<evidence type="ECO:0000256" key="4">
    <source>
        <dbReference type="SAM" id="MobiDB-lite"/>
    </source>
</evidence>
<evidence type="ECO:0000269" key="5">
    <source>
    </source>
</evidence>
<evidence type="ECO:0000269" key="6">
    <source>
    </source>
</evidence>
<evidence type="ECO:0000269" key="7">
    <source>
    </source>
</evidence>
<evidence type="ECO:0000269" key="8">
    <source>
    </source>
</evidence>
<evidence type="ECO:0000303" key="9">
    <source>
    </source>
</evidence>
<evidence type="ECO:0000305" key="10"/>
<evidence type="ECO:0007829" key="11">
    <source>
        <dbReference type="PDB" id="6C8C"/>
    </source>
</evidence>